<evidence type="ECO:0000255" key="1">
    <source>
        <dbReference type="HAMAP-Rule" id="MF_00509"/>
    </source>
</evidence>
<feature type="chain" id="PRO_1000081577" description="Cell division protein ZipA">
    <location>
        <begin position="1"/>
        <end position="335"/>
    </location>
</feature>
<feature type="topological domain" description="Periplasmic" evidence="1">
    <location>
        <begin position="1"/>
        <end position="4"/>
    </location>
</feature>
<feature type="transmembrane region" description="Helical" evidence="1">
    <location>
        <begin position="5"/>
        <end position="25"/>
    </location>
</feature>
<feature type="topological domain" description="Cytoplasmic" evidence="1">
    <location>
        <begin position="26"/>
        <end position="335"/>
    </location>
</feature>
<dbReference type="EMBL" id="CP000947">
    <property type="protein sequence ID" value="ACA32298.1"/>
    <property type="molecule type" value="Genomic_DNA"/>
</dbReference>
<dbReference type="RefSeq" id="WP_012341466.1">
    <property type="nucleotide sequence ID" value="NC_010519.1"/>
</dbReference>
<dbReference type="SMR" id="B0US80"/>
<dbReference type="STRING" id="228400.HSM_0641"/>
<dbReference type="GeneID" id="31486922"/>
<dbReference type="KEGG" id="hsm:HSM_0641"/>
<dbReference type="HOGENOM" id="CLU_030174_1_0_6"/>
<dbReference type="GO" id="GO:0032153">
    <property type="term" value="C:cell division site"/>
    <property type="evidence" value="ECO:0007669"/>
    <property type="project" value="UniProtKB-UniRule"/>
</dbReference>
<dbReference type="GO" id="GO:0005886">
    <property type="term" value="C:plasma membrane"/>
    <property type="evidence" value="ECO:0007669"/>
    <property type="project" value="UniProtKB-SubCell"/>
</dbReference>
<dbReference type="GO" id="GO:0000917">
    <property type="term" value="P:division septum assembly"/>
    <property type="evidence" value="ECO:0007669"/>
    <property type="project" value="TreeGrafter"/>
</dbReference>
<dbReference type="GO" id="GO:0043093">
    <property type="term" value="P:FtsZ-dependent cytokinesis"/>
    <property type="evidence" value="ECO:0007669"/>
    <property type="project" value="UniProtKB-UniRule"/>
</dbReference>
<dbReference type="Gene3D" id="3.30.1400.10">
    <property type="entry name" value="ZipA, C-terminal FtsZ-binding domain"/>
    <property type="match status" value="1"/>
</dbReference>
<dbReference type="HAMAP" id="MF_00509">
    <property type="entry name" value="ZipA"/>
    <property type="match status" value="1"/>
</dbReference>
<dbReference type="InterPro" id="IPR011919">
    <property type="entry name" value="Cell_div_ZipA"/>
</dbReference>
<dbReference type="InterPro" id="IPR007449">
    <property type="entry name" value="ZipA_FtsZ-bd_C"/>
</dbReference>
<dbReference type="InterPro" id="IPR036765">
    <property type="entry name" value="ZipA_FtsZ-bd_C_sf"/>
</dbReference>
<dbReference type="NCBIfam" id="TIGR02205">
    <property type="entry name" value="septum_zipA"/>
    <property type="match status" value="1"/>
</dbReference>
<dbReference type="PANTHER" id="PTHR38685">
    <property type="entry name" value="CELL DIVISION PROTEIN ZIPA"/>
    <property type="match status" value="1"/>
</dbReference>
<dbReference type="PANTHER" id="PTHR38685:SF1">
    <property type="entry name" value="CELL DIVISION PROTEIN ZIPA"/>
    <property type="match status" value="1"/>
</dbReference>
<dbReference type="Pfam" id="PF04354">
    <property type="entry name" value="ZipA_C"/>
    <property type="match status" value="1"/>
</dbReference>
<dbReference type="SMART" id="SM00771">
    <property type="entry name" value="ZipA_C"/>
    <property type="match status" value="1"/>
</dbReference>
<dbReference type="SUPFAM" id="SSF64383">
    <property type="entry name" value="Cell-division protein ZipA, C-terminal domain"/>
    <property type="match status" value="1"/>
</dbReference>
<comment type="function">
    <text evidence="1">Essential cell division protein that stabilizes the FtsZ protofilaments by cross-linking them and that serves as a cytoplasmic membrane anchor for the Z ring. Also required for the recruitment to the septal ring of downstream cell division proteins.</text>
</comment>
<comment type="subunit">
    <text evidence="1">Interacts with FtsZ via their C-terminal domains.</text>
</comment>
<comment type="subcellular location">
    <subcellularLocation>
        <location evidence="1">Cell inner membrane</location>
        <topology evidence="1">Single-pass type I membrane protein</topology>
    </subcellularLocation>
    <text evidence="1">Localizes to the Z ring in an FtsZ-dependent manner.</text>
</comment>
<comment type="similarity">
    <text evidence="1">Belongs to the ZipA family.</text>
</comment>
<organism>
    <name type="scientific">Histophilus somni (strain 2336)</name>
    <name type="common">Haemophilus somnus</name>
    <dbReference type="NCBI Taxonomy" id="228400"/>
    <lineage>
        <taxon>Bacteria</taxon>
        <taxon>Pseudomonadati</taxon>
        <taxon>Pseudomonadota</taxon>
        <taxon>Gammaproteobacteria</taxon>
        <taxon>Pasteurellales</taxon>
        <taxon>Pasteurellaceae</taxon>
        <taxon>Histophilus</taxon>
    </lineage>
</organism>
<keyword id="KW-0131">Cell cycle</keyword>
<keyword id="KW-0132">Cell division</keyword>
<keyword id="KW-0997">Cell inner membrane</keyword>
<keyword id="KW-1003">Cell membrane</keyword>
<keyword id="KW-0472">Membrane</keyword>
<keyword id="KW-0812">Transmembrane</keyword>
<keyword id="KW-1133">Transmembrane helix</keyword>
<accession>B0US80</accession>
<proteinExistence type="inferred from homology"/>
<gene>
    <name evidence="1" type="primary">zipA</name>
    <name type="ordered locus">HSM_0641</name>
</gene>
<name>ZIPA_HISS2</name>
<reference key="1">
    <citation type="submission" date="2008-02" db="EMBL/GenBank/DDBJ databases">
        <title>Complete sequence of Haemophilus somnus 2336.</title>
        <authorList>
            <consortium name="US DOE Joint Genome Institute"/>
            <person name="Siddaramappa S."/>
            <person name="Duncan A.J."/>
            <person name="Challacombe J.F."/>
            <person name="Rainey D."/>
            <person name="Gillaspy A.F."/>
            <person name="Carson M."/>
            <person name="Gipson J."/>
            <person name="Gipson M."/>
            <person name="Bruce D."/>
            <person name="Detter J.C."/>
            <person name="Han C.S."/>
            <person name="Land M."/>
            <person name="Tapia R."/>
            <person name="Thompson L.S."/>
            <person name="Orvis J."/>
            <person name="Zaitshik J."/>
            <person name="Barnes G."/>
            <person name="Brettin T.S."/>
            <person name="Dyer D.W."/>
            <person name="Inzana T.J."/>
        </authorList>
    </citation>
    <scope>NUCLEOTIDE SEQUENCE [LARGE SCALE GENOMIC DNA]</scope>
    <source>
        <strain>2336</strain>
    </source>
</reference>
<sequence length="335" mass="38037">MDLNAILIILGVIALIILVAHGIWSNRREKSQYFENSKNFTREARIREPQENQQYQTADQSQSDFQRNLLETDNDCFSSESAHNSHQPLYHYSEQSAVQSVDQIKIRLPDSEPNYVMQEQFSPKHTDYASMSIEELEKSIDLDEGINSSSQHLRQELAQISGQSIADDKVNIEEHIFTESSISFVEPQTNTEFQQVVEKTKSGNSSFIMLYVVASENQGFSGLQLTKTLDELGFIFGKKQIYHRHVDLSITSPVLFSVANIEQPGTFDLTNIADFYTVGIALFMQLPSYGNVTANLRMMIRAAKTIAQDLDGVVVTEQQEIFDEQAERDYLARVS</sequence>
<protein>
    <recommendedName>
        <fullName evidence="1">Cell division protein ZipA</fullName>
    </recommendedName>
</protein>